<comment type="function">
    <text evidence="1">RNA-binding component of the eukaryotic translation initiation factor 3 (eIF-3) complex, which is involved in protein synthesis of a specialized repertoire of mRNAs and, together with other initiation factors, stimulates binding of mRNA and methionyl-tRNAi to the 40S ribosome. The eIF-3 complex specifically targets and initiates translation of a subset of mRNAs involved in cell proliferation.</text>
</comment>
<comment type="subunit">
    <text evidence="1">Component of the eukaryotic translation initiation factor 3 (eIF-3) complex.</text>
</comment>
<comment type="subcellular location">
    <subcellularLocation>
        <location evidence="1">Cytoplasm</location>
    </subcellularLocation>
</comment>
<comment type="similarity">
    <text evidence="1">Belongs to the eIF-3 subunit A family.</text>
</comment>
<gene>
    <name evidence="1" type="primary">TIF32</name>
    <name type="ordered locus">CNE03290</name>
</gene>
<feature type="chain" id="PRO_0000366360" description="Eukaryotic translation initiation factor 3 subunit A">
    <location>
        <begin position="1"/>
        <end position="952"/>
    </location>
</feature>
<feature type="domain" description="PCI" evidence="2">
    <location>
        <begin position="315"/>
        <end position="491"/>
    </location>
</feature>
<feature type="region of interest" description="Disordered" evidence="3">
    <location>
        <begin position="757"/>
        <end position="952"/>
    </location>
</feature>
<feature type="coiled-coil region" evidence="1">
    <location>
        <begin position="522"/>
        <end position="849"/>
    </location>
</feature>
<feature type="compositionally biased region" description="Basic and acidic residues" evidence="3">
    <location>
        <begin position="757"/>
        <end position="797"/>
    </location>
</feature>
<feature type="compositionally biased region" description="Low complexity" evidence="3">
    <location>
        <begin position="798"/>
        <end position="809"/>
    </location>
</feature>
<feature type="compositionally biased region" description="Basic and acidic residues" evidence="3">
    <location>
        <begin position="810"/>
        <end position="844"/>
    </location>
</feature>
<feature type="compositionally biased region" description="Low complexity" evidence="3">
    <location>
        <begin position="856"/>
        <end position="878"/>
    </location>
</feature>
<feature type="compositionally biased region" description="Low complexity" evidence="3">
    <location>
        <begin position="893"/>
        <end position="918"/>
    </location>
</feature>
<name>EIF3A_CRYNJ</name>
<reference key="1">
    <citation type="journal article" date="2005" name="Science">
        <title>The genome of the basidiomycetous yeast and human pathogen Cryptococcus neoformans.</title>
        <authorList>
            <person name="Loftus B.J."/>
            <person name="Fung E."/>
            <person name="Roncaglia P."/>
            <person name="Rowley D."/>
            <person name="Amedeo P."/>
            <person name="Bruno D."/>
            <person name="Vamathevan J."/>
            <person name="Miranda M."/>
            <person name="Anderson I.J."/>
            <person name="Fraser J.A."/>
            <person name="Allen J.E."/>
            <person name="Bosdet I.E."/>
            <person name="Brent M.R."/>
            <person name="Chiu R."/>
            <person name="Doering T.L."/>
            <person name="Donlin M.J."/>
            <person name="D'Souza C.A."/>
            <person name="Fox D.S."/>
            <person name="Grinberg V."/>
            <person name="Fu J."/>
            <person name="Fukushima M."/>
            <person name="Haas B.J."/>
            <person name="Huang J.C."/>
            <person name="Janbon G."/>
            <person name="Jones S.J.M."/>
            <person name="Koo H.L."/>
            <person name="Krzywinski M.I."/>
            <person name="Kwon-Chung K.J."/>
            <person name="Lengeler K.B."/>
            <person name="Maiti R."/>
            <person name="Marra M.A."/>
            <person name="Marra R.E."/>
            <person name="Mathewson C.A."/>
            <person name="Mitchell T.G."/>
            <person name="Pertea M."/>
            <person name="Riggs F.R."/>
            <person name="Salzberg S.L."/>
            <person name="Schein J.E."/>
            <person name="Shvartsbeyn A."/>
            <person name="Shin H."/>
            <person name="Shumway M."/>
            <person name="Specht C.A."/>
            <person name="Suh B.B."/>
            <person name="Tenney A."/>
            <person name="Utterback T.R."/>
            <person name="Wickes B.L."/>
            <person name="Wortman J.R."/>
            <person name="Wye N.H."/>
            <person name="Kronstad J.W."/>
            <person name="Lodge J.K."/>
            <person name="Heitman J."/>
            <person name="Davis R.W."/>
            <person name="Fraser C.M."/>
            <person name="Hyman R.W."/>
        </authorList>
    </citation>
    <scope>NUCLEOTIDE SEQUENCE [LARGE SCALE GENOMIC DNA]</scope>
    <source>
        <strain>JEC21 / ATCC MYA-565</strain>
    </source>
</reference>
<keyword id="KW-0175">Coiled coil</keyword>
<keyword id="KW-0963">Cytoplasm</keyword>
<keyword id="KW-0396">Initiation factor</keyword>
<keyword id="KW-0648">Protein biosynthesis</keyword>
<keyword id="KW-1185">Reference proteome</keyword>
<keyword id="KW-0694">RNA-binding</keyword>
<protein>
    <recommendedName>
        <fullName evidence="1">Eukaryotic translation initiation factor 3 subunit A</fullName>
        <shortName evidence="1">eIF3a</shortName>
    </recommendedName>
    <alternativeName>
        <fullName evidence="1">Eukaryotic translation initiation factor 3 110 kDa subunit homolog</fullName>
        <shortName evidence="1">eIF3 p110</shortName>
    </alternativeName>
    <alternativeName>
        <fullName evidence="1">Translation initiation factor eIF3, p110 subunit homolog</fullName>
    </alternativeName>
</protein>
<dbReference type="EMBL" id="AE017345">
    <property type="protein sequence ID" value="AAW43583.1"/>
    <property type="molecule type" value="Genomic_DNA"/>
</dbReference>
<dbReference type="RefSeq" id="XP_570890.1">
    <property type="nucleotide sequence ID" value="XM_570890.1"/>
</dbReference>
<dbReference type="SMR" id="P0CN42"/>
<dbReference type="FunCoup" id="P0CN42">
    <property type="interactions" value="667"/>
</dbReference>
<dbReference type="STRING" id="214684.P0CN42"/>
<dbReference type="PaxDb" id="214684-P0CN42"/>
<dbReference type="EnsemblFungi" id="AAW43583">
    <property type="protein sequence ID" value="AAW43583"/>
    <property type="gene ID" value="CNE03290"/>
</dbReference>
<dbReference type="VEuPathDB" id="FungiDB:CNE03290"/>
<dbReference type="eggNOG" id="KOG2072">
    <property type="taxonomic scope" value="Eukaryota"/>
</dbReference>
<dbReference type="HOGENOM" id="CLU_002096_2_1_1"/>
<dbReference type="InParanoid" id="P0CN42"/>
<dbReference type="OMA" id="EHITNKR"/>
<dbReference type="OrthoDB" id="18884at2759"/>
<dbReference type="Proteomes" id="UP000002149">
    <property type="component" value="Chromosome 5"/>
</dbReference>
<dbReference type="GO" id="GO:0010494">
    <property type="term" value="C:cytoplasmic stress granule"/>
    <property type="evidence" value="ECO:0007669"/>
    <property type="project" value="EnsemblFungi"/>
</dbReference>
<dbReference type="GO" id="GO:0016282">
    <property type="term" value="C:eukaryotic 43S preinitiation complex"/>
    <property type="evidence" value="ECO:0007669"/>
    <property type="project" value="UniProtKB-UniRule"/>
</dbReference>
<dbReference type="GO" id="GO:0033290">
    <property type="term" value="C:eukaryotic 48S preinitiation complex"/>
    <property type="evidence" value="ECO:0007669"/>
    <property type="project" value="UniProtKB-UniRule"/>
</dbReference>
<dbReference type="GO" id="GO:0071540">
    <property type="term" value="C:eukaryotic translation initiation factor 3 complex, eIF3e"/>
    <property type="evidence" value="ECO:0000318"/>
    <property type="project" value="GO_Central"/>
</dbReference>
<dbReference type="GO" id="GO:0071541">
    <property type="term" value="C:eukaryotic translation initiation factor 3 complex, eIF3m"/>
    <property type="evidence" value="ECO:0000318"/>
    <property type="project" value="GO_Central"/>
</dbReference>
<dbReference type="GO" id="GO:0043614">
    <property type="term" value="C:multi-eIF complex"/>
    <property type="evidence" value="ECO:0000318"/>
    <property type="project" value="GO_Central"/>
</dbReference>
<dbReference type="GO" id="GO:0003729">
    <property type="term" value="F:mRNA binding"/>
    <property type="evidence" value="ECO:0000318"/>
    <property type="project" value="GO_Central"/>
</dbReference>
<dbReference type="GO" id="GO:0003743">
    <property type="term" value="F:translation initiation factor activity"/>
    <property type="evidence" value="ECO:0007669"/>
    <property type="project" value="UniProtKB-UniRule"/>
</dbReference>
<dbReference type="GO" id="GO:0001732">
    <property type="term" value="P:formation of cytoplasmic translation initiation complex"/>
    <property type="evidence" value="ECO:0000318"/>
    <property type="project" value="GO_Central"/>
</dbReference>
<dbReference type="GO" id="GO:0002188">
    <property type="term" value="P:translation reinitiation"/>
    <property type="evidence" value="ECO:0000318"/>
    <property type="project" value="GO_Central"/>
</dbReference>
<dbReference type="FunFam" id="1.25.40.860:FF:000010">
    <property type="entry name" value="Eukaryotic translation initiation factor 3 subunit A"/>
    <property type="match status" value="1"/>
</dbReference>
<dbReference type="FunFam" id="4.10.860.10:FF:000001">
    <property type="entry name" value="Eukaryotic translation initiation factor 3 subunit A"/>
    <property type="match status" value="1"/>
</dbReference>
<dbReference type="Gene3D" id="1.25.40.860">
    <property type="match status" value="1"/>
</dbReference>
<dbReference type="Gene3D" id="4.10.860.10">
    <property type="entry name" value="UVR domain"/>
    <property type="match status" value="1"/>
</dbReference>
<dbReference type="HAMAP" id="MF_03000">
    <property type="entry name" value="eIF3a"/>
    <property type="match status" value="1"/>
</dbReference>
<dbReference type="InterPro" id="IPR027512">
    <property type="entry name" value="EIF3A"/>
</dbReference>
<dbReference type="InterPro" id="IPR054711">
    <property type="entry name" value="eIF3a_PCI_TPR-like"/>
</dbReference>
<dbReference type="InterPro" id="IPR000717">
    <property type="entry name" value="PCI_dom"/>
</dbReference>
<dbReference type="PANTHER" id="PTHR14005:SF0">
    <property type="entry name" value="EUKARYOTIC TRANSLATION INITIATION FACTOR 3 SUBUNIT A"/>
    <property type="match status" value="1"/>
</dbReference>
<dbReference type="PANTHER" id="PTHR14005">
    <property type="entry name" value="EUKARYOTIC TRANSLATION INITIATION FACTOR 3, THETA SUBUNIT"/>
    <property type="match status" value="1"/>
</dbReference>
<dbReference type="Pfam" id="PF22591">
    <property type="entry name" value="eIF3a_PCI_TPR-like"/>
    <property type="match status" value="1"/>
</dbReference>
<dbReference type="Pfam" id="PF01399">
    <property type="entry name" value="PCI"/>
    <property type="match status" value="1"/>
</dbReference>
<dbReference type="SMART" id="SM00088">
    <property type="entry name" value="PINT"/>
    <property type="match status" value="1"/>
</dbReference>
<dbReference type="PROSITE" id="PS50250">
    <property type="entry name" value="PCI"/>
    <property type="match status" value="1"/>
</dbReference>
<sequence>MPPIYVKPENALKRSEELLALGTPQSQQQAFDNLVEVFQSKRFKQTPINVLEPIVTKFIDLCVVLSRKAHAKSGLLVFKSAAQTTNVGAIERVLNHFIAKAEARLAAAVEQAKKEVAALPDVPVVDDDLPLQPASLMLDCFVDSAGDRERIERRLIAPAQKFCWDSYDICLDIAKSNDRLEVIYQSIAHRAFHFCKIHQRKADFRRLCEQRLRKDLANAAKYSHQQHAINLSDPETLGRFLDTRFLQLETAVELELWQEAFRSIEDVHGLIAGRKGTKPSMMANYYEKLTQIFKAEGGKQTAVFHAAAWARYFQHAERAGIVNDKASGCVLLSALAVPLGEVEVKQRLVALLNLPKTPTREALVQDAAAKHLKRVPADIRQIYKILEVDFEPTTASKVLAPLITSLSPEYQPYLPALRDVVLSRLLQALAQVYDSVTLSHILDLVKPLDNTPWATDMSSLEKFLVTACRRGDIRASVDHVAQTITFVSTPPDANGLQTLAVCLYNTIQYLNPSRLAPVSRSDAFAAAIAQAEEERKAASHKRQIVIRRRELLEEAKLRREKEASTALAERLKIKAEEDARRAKEEAKQAEIDRVRKQIHETKQAEAKQLAASLAAQGALKVDISSIEDLDSSKLVAMQVEQLAKEKKELSERLRIVGKRVDHLERAMRKEERPLLAQDYERQKAEDRAAHDRANQIAREQAIEQQRAARELKQRLGRMLEDYEAVKERIESQMQEELKAAKEEARRKIEEEKAQLREKVIKRKREEKERKLKEAREAEERKRKEEEEAAQKAEEEARAAAALEAEAAAAEQRRAEREAQRQSDLERIRAQQEREEEALRRRQAEKAAATSGGSAYRPPARAGTTPPTASPAPSSGGPSWLARRKAMEAQSAGGAPVASSPKPVPSNSAAASAPASNGPESIAGEAEKPALTGSVWRRGMGARRGMPSTRGGA</sequence>
<organism>
    <name type="scientific">Cryptococcus neoformans var. neoformans serotype D (strain JEC21 / ATCC MYA-565)</name>
    <name type="common">Filobasidiella neoformans</name>
    <dbReference type="NCBI Taxonomy" id="214684"/>
    <lineage>
        <taxon>Eukaryota</taxon>
        <taxon>Fungi</taxon>
        <taxon>Dikarya</taxon>
        <taxon>Basidiomycota</taxon>
        <taxon>Agaricomycotina</taxon>
        <taxon>Tremellomycetes</taxon>
        <taxon>Tremellales</taxon>
        <taxon>Cryptococcaceae</taxon>
        <taxon>Cryptococcus</taxon>
        <taxon>Cryptococcus neoformans species complex</taxon>
    </lineage>
</organism>
<evidence type="ECO:0000255" key="1">
    <source>
        <dbReference type="HAMAP-Rule" id="MF_03000"/>
    </source>
</evidence>
<evidence type="ECO:0000255" key="2">
    <source>
        <dbReference type="PROSITE-ProRule" id="PRU01185"/>
    </source>
</evidence>
<evidence type="ECO:0000256" key="3">
    <source>
        <dbReference type="SAM" id="MobiDB-lite"/>
    </source>
</evidence>
<proteinExistence type="inferred from homology"/>
<accession>P0CN42</accession>
<accession>Q55S53</accession>
<accession>Q5KGK5</accession>